<name>YCIB_BURM7</name>
<accession>A3MKH4</accession>
<dbReference type="EMBL" id="CP000548">
    <property type="protein sequence ID" value="ABO04086.1"/>
    <property type="molecule type" value="Genomic_DNA"/>
</dbReference>
<dbReference type="RefSeq" id="WP_004192037.1">
    <property type="nucleotide sequence ID" value="NZ_CP007802.1"/>
</dbReference>
<dbReference type="KEGG" id="bmaz:BM44_1900"/>
<dbReference type="KEGG" id="bmn:BMA10247_1206"/>
<dbReference type="PATRIC" id="fig|320389.8.peg.2134"/>
<dbReference type="GO" id="GO:0005886">
    <property type="term" value="C:plasma membrane"/>
    <property type="evidence" value="ECO:0007669"/>
    <property type="project" value="UniProtKB-SubCell"/>
</dbReference>
<dbReference type="HAMAP" id="MF_00189">
    <property type="entry name" value="YciB"/>
    <property type="match status" value="1"/>
</dbReference>
<dbReference type="InterPro" id="IPR006008">
    <property type="entry name" value="YciB"/>
</dbReference>
<dbReference type="NCBIfam" id="TIGR00997">
    <property type="entry name" value="ispZ"/>
    <property type="match status" value="1"/>
</dbReference>
<dbReference type="NCBIfam" id="NF001325">
    <property type="entry name" value="PRK00259.1-3"/>
    <property type="match status" value="1"/>
</dbReference>
<dbReference type="PANTHER" id="PTHR36917:SF1">
    <property type="entry name" value="INNER MEMBRANE-SPANNING PROTEIN YCIB"/>
    <property type="match status" value="1"/>
</dbReference>
<dbReference type="PANTHER" id="PTHR36917">
    <property type="entry name" value="INTRACELLULAR SEPTATION PROTEIN A-RELATED"/>
    <property type="match status" value="1"/>
</dbReference>
<dbReference type="Pfam" id="PF04279">
    <property type="entry name" value="IspA"/>
    <property type="match status" value="1"/>
</dbReference>
<comment type="function">
    <text evidence="1">Plays a role in cell envelope biogenesis, maintenance of cell envelope integrity and membrane homeostasis.</text>
</comment>
<comment type="subcellular location">
    <subcellularLocation>
        <location evidence="1">Cell inner membrane</location>
        <topology evidence="1">Multi-pass membrane protein</topology>
    </subcellularLocation>
</comment>
<comment type="similarity">
    <text evidence="1">Belongs to the YciB family.</text>
</comment>
<sequence>MKFLFDLFPIILFFAAFKLWGIFTATAVAIAATLAQVAWVAFRHRKVDTMLWVSLGVIVVFGGATLVLHDEKFIQWKPTVLYWLFAVGLVAARYAFGKNLIEKMMGKQLTLPEPVWDKLNLAWAAFFAALGVTNLYVVRNFTESQWVNFKLFGTTGAIVVFVILQSLWLAKYLKEE</sequence>
<reference key="1">
    <citation type="journal article" date="2010" name="Genome Biol. Evol.">
        <title>Continuing evolution of Burkholderia mallei through genome reduction and large-scale rearrangements.</title>
        <authorList>
            <person name="Losada L."/>
            <person name="Ronning C.M."/>
            <person name="DeShazer D."/>
            <person name="Woods D."/>
            <person name="Fedorova N."/>
            <person name="Kim H.S."/>
            <person name="Shabalina S.A."/>
            <person name="Pearson T.R."/>
            <person name="Brinkac L."/>
            <person name="Tan P."/>
            <person name="Nandi T."/>
            <person name="Crabtree J."/>
            <person name="Badger J."/>
            <person name="Beckstrom-Sternberg S."/>
            <person name="Saqib M."/>
            <person name="Schutzer S.E."/>
            <person name="Keim P."/>
            <person name="Nierman W.C."/>
        </authorList>
    </citation>
    <scope>NUCLEOTIDE SEQUENCE [LARGE SCALE GENOMIC DNA]</scope>
    <source>
        <strain>NCTC 10247</strain>
    </source>
</reference>
<keyword id="KW-0997">Cell inner membrane</keyword>
<keyword id="KW-1003">Cell membrane</keyword>
<keyword id="KW-0472">Membrane</keyword>
<keyword id="KW-0812">Transmembrane</keyword>
<keyword id="KW-1133">Transmembrane helix</keyword>
<gene>
    <name evidence="1" type="primary">yciB</name>
    <name type="ordered locus">BMA10247_1206</name>
</gene>
<proteinExistence type="inferred from homology"/>
<feature type="chain" id="PRO_1000020992" description="Inner membrane-spanning protein YciB">
    <location>
        <begin position="1"/>
        <end position="176"/>
    </location>
</feature>
<feature type="transmembrane region" description="Helical" evidence="1">
    <location>
        <begin position="3"/>
        <end position="23"/>
    </location>
</feature>
<feature type="transmembrane region" description="Helical" evidence="1">
    <location>
        <begin position="49"/>
        <end position="69"/>
    </location>
</feature>
<feature type="transmembrane region" description="Helical" evidence="1">
    <location>
        <begin position="72"/>
        <end position="92"/>
    </location>
</feature>
<feature type="transmembrane region" description="Helical" evidence="1">
    <location>
        <begin position="118"/>
        <end position="138"/>
    </location>
</feature>
<feature type="transmembrane region" description="Helical" evidence="1">
    <location>
        <begin position="149"/>
        <end position="169"/>
    </location>
</feature>
<protein>
    <recommendedName>
        <fullName evidence="1">Inner membrane-spanning protein YciB</fullName>
    </recommendedName>
</protein>
<evidence type="ECO:0000255" key="1">
    <source>
        <dbReference type="HAMAP-Rule" id="MF_00189"/>
    </source>
</evidence>
<organism>
    <name type="scientific">Burkholderia mallei (strain NCTC 10247)</name>
    <dbReference type="NCBI Taxonomy" id="320389"/>
    <lineage>
        <taxon>Bacteria</taxon>
        <taxon>Pseudomonadati</taxon>
        <taxon>Pseudomonadota</taxon>
        <taxon>Betaproteobacteria</taxon>
        <taxon>Burkholderiales</taxon>
        <taxon>Burkholderiaceae</taxon>
        <taxon>Burkholderia</taxon>
        <taxon>pseudomallei group</taxon>
    </lineage>
</organism>